<name>RS15_FLAPJ</name>
<organism>
    <name type="scientific">Flavobacterium psychrophilum (strain ATCC 49511 / DSM 21280 / CIP 103535 / JIP02/86)</name>
    <dbReference type="NCBI Taxonomy" id="402612"/>
    <lineage>
        <taxon>Bacteria</taxon>
        <taxon>Pseudomonadati</taxon>
        <taxon>Bacteroidota</taxon>
        <taxon>Flavobacteriia</taxon>
        <taxon>Flavobacteriales</taxon>
        <taxon>Flavobacteriaceae</taxon>
        <taxon>Flavobacterium</taxon>
    </lineage>
</organism>
<protein>
    <recommendedName>
        <fullName evidence="1">Small ribosomal subunit protein uS15</fullName>
    </recommendedName>
    <alternativeName>
        <fullName evidence="2">30S ribosomal protein S15</fullName>
    </alternativeName>
</protein>
<sequence>MYLTKEIKEEIFAKHGEKTNTGKAEAQIALFTFRISHLTEHLKKNRHDYNTERSLVLLVGKRRSLLDYLKKKEINRYREIIKELGIRK</sequence>
<feature type="chain" id="PRO_1000054781" description="Small ribosomal subunit protein uS15">
    <location>
        <begin position="1"/>
        <end position="88"/>
    </location>
</feature>
<comment type="function">
    <text evidence="1">One of the primary rRNA binding proteins, it binds directly to 16S rRNA where it helps nucleate assembly of the platform of the 30S subunit by binding and bridging several RNA helices of the 16S rRNA.</text>
</comment>
<comment type="function">
    <text evidence="1">Forms an intersubunit bridge (bridge B4) with the 23S rRNA of the 50S subunit in the ribosome.</text>
</comment>
<comment type="subunit">
    <text evidence="1">Part of the 30S ribosomal subunit. Forms a bridge to the 50S subunit in the 70S ribosome, contacting the 23S rRNA.</text>
</comment>
<comment type="similarity">
    <text evidence="1">Belongs to the universal ribosomal protein uS15 family.</text>
</comment>
<accession>A6H184</accession>
<keyword id="KW-1185">Reference proteome</keyword>
<keyword id="KW-0687">Ribonucleoprotein</keyword>
<keyword id="KW-0689">Ribosomal protein</keyword>
<keyword id="KW-0694">RNA-binding</keyword>
<keyword id="KW-0699">rRNA-binding</keyword>
<gene>
    <name evidence="1" type="primary">rpsO</name>
    <name type="ordered locus">FP2045</name>
</gene>
<reference key="1">
    <citation type="journal article" date="2007" name="Nat. Biotechnol.">
        <title>Complete genome sequence of the fish pathogen Flavobacterium psychrophilum.</title>
        <authorList>
            <person name="Duchaud E."/>
            <person name="Boussaha M."/>
            <person name="Loux V."/>
            <person name="Bernardet J.-F."/>
            <person name="Michel C."/>
            <person name="Kerouault B."/>
            <person name="Mondot S."/>
            <person name="Nicolas P."/>
            <person name="Bossy R."/>
            <person name="Caron C."/>
            <person name="Bessieres P."/>
            <person name="Gibrat J.-F."/>
            <person name="Claverol S."/>
            <person name="Dumetz F."/>
            <person name="Le Henaff M."/>
            <person name="Benmansour A."/>
        </authorList>
    </citation>
    <scope>NUCLEOTIDE SEQUENCE [LARGE SCALE GENOMIC DNA]</scope>
    <source>
        <strain>ATCC 49511 / DSM 21280 / CIP 103535 / JIP02/86</strain>
    </source>
</reference>
<evidence type="ECO:0000255" key="1">
    <source>
        <dbReference type="HAMAP-Rule" id="MF_01343"/>
    </source>
</evidence>
<evidence type="ECO:0000305" key="2"/>
<proteinExistence type="inferred from homology"/>
<dbReference type="EMBL" id="AM398681">
    <property type="protein sequence ID" value="CAL44108.1"/>
    <property type="molecule type" value="Genomic_DNA"/>
</dbReference>
<dbReference type="RefSeq" id="WP_011964145.1">
    <property type="nucleotide sequence ID" value="NC_009613.3"/>
</dbReference>
<dbReference type="RefSeq" id="YP_001296910.1">
    <property type="nucleotide sequence ID" value="NC_009613.3"/>
</dbReference>
<dbReference type="SMR" id="A6H184"/>
<dbReference type="STRING" id="402612.FP2045"/>
<dbReference type="EnsemblBacteria" id="CAL44108">
    <property type="protein sequence ID" value="CAL44108"/>
    <property type="gene ID" value="FP2045"/>
</dbReference>
<dbReference type="GeneID" id="66551771"/>
<dbReference type="KEGG" id="fps:FP2045"/>
<dbReference type="PATRIC" id="fig|402612.5.peg.2070"/>
<dbReference type="eggNOG" id="COG0184">
    <property type="taxonomic scope" value="Bacteria"/>
</dbReference>
<dbReference type="HOGENOM" id="CLU_148518_0_1_10"/>
<dbReference type="OrthoDB" id="9799262at2"/>
<dbReference type="Proteomes" id="UP000006394">
    <property type="component" value="Chromosome"/>
</dbReference>
<dbReference type="GO" id="GO:0022627">
    <property type="term" value="C:cytosolic small ribosomal subunit"/>
    <property type="evidence" value="ECO:0007669"/>
    <property type="project" value="TreeGrafter"/>
</dbReference>
<dbReference type="GO" id="GO:0019843">
    <property type="term" value="F:rRNA binding"/>
    <property type="evidence" value="ECO:0007669"/>
    <property type="project" value="UniProtKB-UniRule"/>
</dbReference>
<dbReference type="GO" id="GO:0003735">
    <property type="term" value="F:structural constituent of ribosome"/>
    <property type="evidence" value="ECO:0007669"/>
    <property type="project" value="InterPro"/>
</dbReference>
<dbReference type="GO" id="GO:0006412">
    <property type="term" value="P:translation"/>
    <property type="evidence" value="ECO:0007669"/>
    <property type="project" value="UniProtKB-UniRule"/>
</dbReference>
<dbReference type="CDD" id="cd00353">
    <property type="entry name" value="Ribosomal_S15p_S13e"/>
    <property type="match status" value="1"/>
</dbReference>
<dbReference type="Gene3D" id="6.10.250.3130">
    <property type="match status" value="1"/>
</dbReference>
<dbReference type="Gene3D" id="1.10.287.10">
    <property type="entry name" value="S15/NS1, RNA-binding"/>
    <property type="match status" value="1"/>
</dbReference>
<dbReference type="HAMAP" id="MF_01343_B">
    <property type="entry name" value="Ribosomal_uS15_B"/>
    <property type="match status" value="1"/>
</dbReference>
<dbReference type="InterPro" id="IPR000589">
    <property type="entry name" value="Ribosomal_uS15"/>
</dbReference>
<dbReference type="InterPro" id="IPR005290">
    <property type="entry name" value="Ribosomal_uS15_bac-type"/>
</dbReference>
<dbReference type="InterPro" id="IPR009068">
    <property type="entry name" value="uS15_NS1_RNA-bd_sf"/>
</dbReference>
<dbReference type="NCBIfam" id="TIGR00952">
    <property type="entry name" value="S15_bact"/>
    <property type="match status" value="1"/>
</dbReference>
<dbReference type="PANTHER" id="PTHR23321">
    <property type="entry name" value="RIBOSOMAL PROTEIN S15, BACTERIAL AND ORGANELLAR"/>
    <property type="match status" value="1"/>
</dbReference>
<dbReference type="PANTHER" id="PTHR23321:SF26">
    <property type="entry name" value="SMALL RIBOSOMAL SUBUNIT PROTEIN US15M"/>
    <property type="match status" value="1"/>
</dbReference>
<dbReference type="Pfam" id="PF00312">
    <property type="entry name" value="Ribosomal_S15"/>
    <property type="match status" value="1"/>
</dbReference>
<dbReference type="SMART" id="SM01387">
    <property type="entry name" value="Ribosomal_S15"/>
    <property type="match status" value="1"/>
</dbReference>
<dbReference type="SUPFAM" id="SSF47060">
    <property type="entry name" value="S15/NS1 RNA-binding domain"/>
    <property type="match status" value="1"/>
</dbReference>
<dbReference type="PROSITE" id="PS00362">
    <property type="entry name" value="RIBOSOMAL_S15"/>
    <property type="match status" value="1"/>
</dbReference>